<dbReference type="EC" id="3.11.1.1" evidence="1"/>
<dbReference type="EMBL" id="CR626927">
    <property type="protein sequence ID" value="CAH09178.1"/>
    <property type="molecule type" value="Genomic_DNA"/>
</dbReference>
<dbReference type="RefSeq" id="WP_005797923.1">
    <property type="nucleotide sequence ID" value="NZ_UFTH01000001.1"/>
</dbReference>
<dbReference type="SMR" id="Q5L9P9"/>
<dbReference type="PaxDb" id="272559-BF9343_3397"/>
<dbReference type="GeneID" id="60370026"/>
<dbReference type="KEGG" id="bfs:BF9343_3397"/>
<dbReference type="eggNOG" id="COG0637">
    <property type="taxonomic scope" value="Bacteria"/>
</dbReference>
<dbReference type="HOGENOM" id="CLU_045011_12_0_10"/>
<dbReference type="Proteomes" id="UP000006731">
    <property type="component" value="Chromosome"/>
</dbReference>
<dbReference type="GO" id="GO:0005829">
    <property type="term" value="C:cytosol"/>
    <property type="evidence" value="ECO:0007669"/>
    <property type="project" value="TreeGrafter"/>
</dbReference>
<dbReference type="GO" id="GO:0000287">
    <property type="term" value="F:magnesium ion binding"/>
    <property type="evidence" value="ECO:0007669"/>
    <property type="project" value="UniProtKB-UniRule"/>
</dbReference>
<dbReference type="GO" id="GO:0008967">
    <property type="term" value="F:phosphoglycolate phosphatase activity"/>
    <property type="evidence" value="ECO:0007669"/>
    <property type="project" value="TreeGrafter"/>
</dbReference>
<dbReference type="GO" id="GO:0050194">
    <property type="term" value="F:phosphonoacetaldehyde hydrolase activity"/>
    <property type="evidence" value="ECO:0007669"/>
    <property type="project" value="UniProtKB-UniRule"/>
</dbReference>
<dbReference type="GO" id="GO:0006281">
    <property type="term" value="P:DNA repair"/>
    <property type="evidence" value="ECO:0007669"/>
    <property type="project" value="TreeGrafter"/>
</dbReference>
<dbReference type="GO" id="GO:0019700">
    <property type="term" value="P:organic phosphonate catabolic process"/>
    <property type="evidence" value="ECO:0007669"/>
    <property type="project" value="InterPro"/>
</dbReference>
<dbReference type="CDD" id="cd02586">
    <property type="entry name" value="HAD_PHN"/>
    <property type="match status" value="1"/>
</dbReference>
<dbReference type="Gene3D" id="3.40.50.1000">
    <property type="entry name" value="HAD superfamily/HAD-like"/>
    <property type="match status" value="1"/>
</dbReference>
<dbReference type="Gene3D" id="1.10.150.240">
    <property type="entry name" value="Putative phosphatase, domain 2"/>
    <property type="match status" value="1"/>
</dbReference>
<dbReference type="HAMAP" id="MF_01375">
    <property type="entry name" value="PhnX"/>
    <property type="match status" value="1"/>
</dbReference>
<dbReference type="InterPro" id="IPR050155">
    <property type="entry name" value="HAD-like_hydrolase_sf"/>
</dbReference>
<dbReference type="InterPro" id="IPR036412">
    <property type="entry name" value="HAD-like_sf"/>
</dbReference>
<dbReference type="InterPro" id="IPR023214">
    <property type="entry name" value="HAD_sf"/>
</dbReference>
<dbReference type="InterPro" id="IPR023198">
    <property type="entry name" value="PGP-like_dom2"/>
</dbReference>
<dbReference type="InterPro" id="IPR006323">
    <property type="entry name" value="Phosphonoacetald_hydro"/>
</dbReference>
<dbReference type="NCBIfam" id="TIGR01422">
    <property type="entry name" value="phosphonatase"/>
    <property type="match status" value="1"/>
</dbReference>
<dbReference type="PANTHER" id="PTHR43434">
    <property type="entry name" value="PHOSPHOGLYCOLATE PHOSPHATASE"/>
    <property type="match status" value="1"/>
</dbReference>
<dbReference type="PANTHER" id="PTHR43434:SF19">
    <property type="entry name" value="PHOSPHONOACETALDEHYDE HYDROLASE"/>
    <property type="match status" value="1"/>
</dbReference>
<dbReference type="Pfam" id="PF00702">
    <property type="entry name" value="Hydrolase"/>
    <property type="match status" value="1"/>
</dbReference>
<dbReference type="SFLD" id="SFLDG01135">
    <property type="entry name" value="C1.5.6:_HAD__Beta-PGM__Phospha"/>
    <property type="match status" value="1"/>
</dbReference>
<dbReference type="SFLD" id="SFLDS00003">
    <property type="entry name" value="Haloacid_Dehalogenase"/>
    <property type="match status" value="1"/>
</dbReference>
<dbReference type="SUPFAM" id="SSF56784">
    <property type="entry name" value="HAD-like"/>
    <property type="match status" value="1"/>
</dbReference>
<reference key="1">
    <citation type="journal article" date="2005" name="Science">
        <title>Extensive DNA inversions in the B. fragilis genome control variable gene expression.</title>
        <authorList>
            <person name="Cerdeno-Tarraga A.-M."/>
            <person name="Patrick S."/>
            <person name="Crossman L.C."/>
            <person name="Blakely G."/>
            <person name="Abratt V."/>
            <person name="Lennard N."/>
            <person name="Poxton I."/>
            <person name="Duerden B."/>
            <person name="Harris B."/>
            <person name="Quail M.A."/>
            <person name="Barron A."/>
            <person name="Clark L."/>
            <person name="Corton C."/>
            <person name="Doggett J."/>
            <person name="Holden M.T.G."/>
            <person name="Larke N."/>
            <person name="Line A."/>
            <person name="Lord A."/>
            <person name="Norbertczak H."/>
            <person name="Ormond D."/>
            <person name="Price C."/>
            <person name="Rabbinowitsch E."/>
            <person name="Woodward J."/>
            <person name="Barrell B.G."/>
            <person name="Parkhill J."/>
        </authorList>
    </citation>
    <scope>NUCLEOTIDE SEQUENCE [LARGE SCALE GENOMIC DNA]</scope>
    <source>
        <strain>ATCC 25285 / DSM 2151 / CCUG 4856 / JCM 11019 / LMG 10263 / NCTC 9343 / Onslow / VPI 2553 / EN-2</strain>
    </source>
</reference>
<gene>
    <name evidence="1" type="primary">phnX</name>
    <name type="ordered locus">BF3488</name>
</gene>
<protein>
    <recommendedName>
        <fullName evidence="1">Phosphonoacetaldehyde hydrolase</fullName>
        <shortName evidence="1">Phosphonatase</shortName>
        <ecNumber evidence="1">3.11.1.1</ecNumber>
    </recommendedName>
    <alternativeName>
        <fullName evidence="1">Phosphonoacetaldehyde phosphonohydrolase</fullName>
    </alternativeName>
</protein>
<feature type="chain" id="PRO_0000284582" description="Phosphonoacetaldehyde hydrolase">
    <location>
        <begin position="1"/>
        <end position="263"/>
    </location>
</feature>
<feature type="active site" description="Nucleophile" evidence="1">
    <location>
        <position position="10"/>
    </location>
</feature>
<feature type="active site" description="Schiff-base intermediate with substrate" evidence="1">
    <location>
        <position position="51"/>
    </location>
</feature>
<feature type="binding site" evidence="1">
    <location>
        <position position="10"/>
    </location>
    <ligand>
        <name>Mg(2+)</name>
        <dbReference type="ChEBI" id="CHEBI:18420"/>
    </ligand>
</feature>
<feature type="binding site" evidence="1">
    <location>
        <position position="12"/>
    </location>
    <ligand>
        <name>Mg(2+)</name>
        <dbReference type="ChEBI" id="CHEBI:18420"/>
    </ligand>
</feature>
<feature type="binding site" evidence="1">
    <location>
        <position position="184"/>
    </location>
    <ligand>
        <name>Mg(2+)</name>
        <dbReference type="ChEBI" id="CHEBI:18420"/>
    </ligand>
</feature>
<sequence>MKKIECIIMDWAGTAVDYGCFAPVAAFIKAFAGKGLTIDVEQTRKPMGLPKIQHIRELLTMPEVNEQFINRYRRAWTEEDVVELNHLFEKYLFASLKEYTDPIPGVIPTLEKLRAEGLKIGSTTGYTREMMDVVLPEAQAKGYRVDYCATPNLLPAGRPAPYMIFENLTKLAVPDPDTVVKVGDTIADIQEGVHAKVWSVGVVLGSNEMALTEEETHALPAAELENRIAEVKQRMLAAGASYVIRSIEELPALIQLINSKLNH</sequence>
<name>PHNX_BACFN</name>
<keyword id="KW-0378">Hydrolase</keyword>
<keyword id="KW-0460">Magnesium</keyword>
<keyword id="KW-0479">Metal-binding</keyword>
<keyword id="KW-0704">Schiff base</keyword>
<proteinExistence type="inferred from homology"/>
<evidence type="ECO:0000255" key="1">
    <source>
        <dbReference type="HAMAP-Rule" id="MF_01375"/>
    </source>
</evidence>
<organism>
    <name type="scientific">Bacteroides fragilis (strain ATCC 25285 / DSM 2151 / CCUG 4856 / JCM 11019 / LMG 10263 / NCTC 9343 / Onslow / VPI 2553 / EN-2)</name>
    <dbReference type="NCBI Taxonomy" id="272559"/>
    <lineage>
        <taxon>Bacteria</taxon>
        <taxon>Pseudomonadati</taxon>
        <taxon>Bacteroidota</taxon>
        <taxon>Bacteroidia</taxon>
        <taxon>Bacteroidales</taxon>
        <taxon>Bacteroidaceae</taxon>
        <taxon>Bacteroides</taxon>
    </lineage>
</organism>
<comment type="function">
    <text evidence="1">Involved in phosphonate degradation.</text>
</comment>
<comment type="catalytic activity">
    <reaction evidence="1">
        <text>phosphonoacetaldehyde + H2O = acetaldehyde + phosphate + H(+)</text>
        <dbReference type="Rhea" id="RHEA:18905"/>
        <dbReference type="ChEBI" id="CHEBI:15343"/>
        <dbReference type="ChEBI" id="CHEBI:15377"/>
        <dbReference type="ChEBI" id="CHEBI:15378"/>
        <dbReference type="ChEBI" id="CHEBI:43474"/>
        <dbReference type="ChEBI" id="CHEBI:58383"/>
        <dbReference type="EC" id="3.11.1.1"/>
    </reaction>
</comment>
<comment type="cofactor">
    <cofactor evidence="1">
        <name>Mg(2+)</name>
        <dbReference type="ChEBI" id="CHEBI:18420"/>
    </cofactor>
    <text evidence="1">Binds 1 Mg(2+) ion per subunit.</text>
</comment>
<comment type="subunit">
    <text evidence="1">Homodimer.</text>
</comment>
<comment type="similarity">
    <text evidence="1">Belongs to the HAD-like hydrolase superfamily. PhnX family.</text>
</comment>
<accession>Q5L9P9</accession>